<feature type="chain" id="PRO_0000308455" description="Processive diacylglycerol beta-glucosyltransferase">
    <location>
        <begin position="1"/>
        <end position="391"/>
    </location>
</feature>
<dbReference type="EC" id="2.4.1.315"/>
<dbReference type="EMBL" id="BA000017">
    <property type="protein sequence ID" value="BAB57179.1"/>
    <property type="molecule type" value="Genomic_DNA"/>
</dbReference>
<dbReference type="RefSeq" id="WP_000258645.1">
    <property type="nucleotide sequence ID" value="NC_002758.2"/>
</dbReference>
<dbReference type="SMR" id="Q99V75"/>
<dbReference type="CAZy" id="GT28">
    <property type="family name" value="Glycosyltransferase Family 28"/>
</dbReference>
<dbReference type="KEGG" id="sav:SAV1017"/>
<dbReference type="HOGENOM" id="CLU_028367_0_1_9"/>
<dbReference type="PhylomeDB" id="Q99V75"/>
<dbReference type="UniPathway" id="UPA00894"/>
<dbReference type="Proteomes" id="UP000002481">
    <property type="component" value="Chromosome"/>
</dbReference>
<dbReference type="GO" id="GO:0005886">
    <property type="term" value="C:plasma membrane"/>
    <property type="evidence" value="ECO:0007669"/>
    <property type="project" value="UniProtKB-SubCell"/>
</dbReference>
<dbReference type="GO" id="GO:0047228">
    <property type="term" value="F:1,2-diacylglycerol 3-glucosyltransferase activity"/>
    <property type="evidence" value="ECO:0007669"/>
    <property type="project" value="UniProtKB-UniRule"/>
</dbReference>
<dbReference type="GO" id="GO:0009246">
    <property type="term" value="P:enterobacterial common antigen biosynthetic process"/>
    <property type="evidence" value="ECO:0007669"/>
    <property type="project" value="UniProtKB-UniPathway"/>
</dbReference>
<dbReference type="GO" id="GO:0009247">
    <property type="term" value="P:glycolipid biosynthetic process"/>
    <property type="evidence" value="ECO:0007669"/>
    <property type="project" value="UniProtKB-UniRule"/>
</dbReference>
<dbReference type="GO" id="GO:0070395">
    <property type="term" value="P:lipoteichoic acid biosynthetic process"/>
    <property type="evidence" value="ECO:0007669"/>
    <property type="project" value="UniProtKB-UniRule"/>
</dbReference>
<dbReference type="CDD" id="cd17507">
    <property type="entry name" value="GT28_Beta-DGS-like"/>
    <property type="match status" value="1"/>
</dbReference>
<dbReference type="Gene3D" id="3.40.50.2000">
    <property type="entry name" value="Glycogen Phosphorylase B"/>
    <property type="match status" value="2"/>
</dbReference>
<dbReference type="HAMAP" id="MF_01280">
    <property type="entry name" value="Diacylglyc_glucosyltr"/>
    <property type="match status" value="1"/>
</dbReference>
<dbReference type="InterPro" id="IPR009695">
    <property type="entry name" value="Diacylglyc_glucosyltr_N"/>
</dbReference>
<dbReference type="InterPro" id="IPR007235">
    <property type="entry name" value="Glyco_trans_28_C"/>
</dbReference>
<dbReference type="InterPro" id="IPR050519">
    <property type="entry name" value="Glycosyltransf_28_UgtP"/>
</dbReference>
<dbReference type="InterPro" id="IPR023589">
    <property type="entry name" value="Pro_diacylglycrl_glcsylTrfase"/>
</dbReference>
<dbReference type="NCBIfam" id="NF010134">
    <property type="entry name" value="PRK13608.1"/>
    <property type="match status" value="1"/>
</dbReference>
<dbReference type="PANTHER" id="PTHR43025">
    <property type="entry name" value="MONOGALACTOSYLDIACYLGLYCEROL SYNTHASE"/>
    <property type="match status" value="1"/>
</dbReference>
<dbReference type="PANTHER" id="PTHR43025:SF3">
    <property type="entry name" value="MONOGALACTOSYLDIACYLGLYCEROL SYNTHASE 1, CHLOROPLASTIC"/>
    <property type="match status" value="1"/>
</dbReference>
<dbReference type="Pfam" id="PF04101">
    <property type="entry name" value="Glyco_tran_28_C"/>
    <property type="match status" value="1"/>
</dbReference>
<dbReference type="Pfam" id="PF06925">
    <property type="entry name" value="MGDG_synth"/>
    <property type="match status" value="1"/>
</dbReference>
<dbReference type="SUPFAM" id="SSF53756">
    <property type="entry name" value="UDP-Glycosyltransferase/glycogen phosphorylase"/>
    <property type="match status" value="1"/>
</dbReference>
<gene>
    <name evidence="1" type="primary">ugtP</name>
    <name type="ordered locus">SAV1017</name>
</gene>
<comment type="function">
    <text evidence="1">Processive glucosyltransferase involved in the biosynthesis of both the bilayer- and non-bilayer-forming membrane glucolipids. Is able to successively transfer two glucosyl residues to diacylglycerol (DAG), thereby catalyzing the formation of beta-monoglucosyl-DAG (3-O-(beta-D-glucopyranosyl)-1,2-diacyl-sn-glycerol) and beta-diglucosyl-DAG (3-O-(beta-D-glucopyranosyl-beta-(1-&gt;6)-D-glucopyranosyl)-1,2-diacyl-sn-glycerol). Beta-diglucosyl-DAG is the predominant glycolipid found in Bacillales and is also used as a membrane anchor for lipoteichoic acid (LTA).</text>
</comment>
<comment type="catalytic activity">
    <reaction>
        <text>a 1,2-diacyl-3-O-(beta-D-glucopyranosyl)-sn-glycerol + UDP-alpha-D-glucose = a 1,2-diacyl-3-O-(beta-D-Glc-(1-&gt;6)-beta-D-Glc)-sn-glycerol + UDP + H(+)</text>
        <dbReference type="Rhea" id="RHEA:39031"/>
        <dbReference type="ChEBI" id="CHEBI:15378"/>
        <dbReference type="ChEBI" id="CHEBI:58223"/>
        <dbReference type="ChEBI" id="CHEBI:58885"/>
        <dbReference type="ChEBI" id="CHEBI:75799"/>
        <dbReference type="ChEBI" id="CHEBI:76264"/>
        <dbReference type="EC" id="2.4.1.315"/>
    </reaction>
</comment>
<comment type="catalytic activity">
    <reaction evidence="1">
        <text>a 1,2-diacyl-sn-glycerol + UDP-alpha-D-glucose = a 1,2-diacyl-3-O-(beta-D-glucopyranosyl)-sn-glycerol + UDP + H(+)</text>
        <dbReference type="Rhea" id="RHEA:17285"/>
        <dbReference type="ChEBI" id="CHEBI:15378"/>
        <dbReference type="ChEBI" id="CHEBI:17815"/>
        <dbReference type="ChEBI" id="CHEBI:58223"/>
        <dbReference type="ChEBI" id="CHEBI:58885"/>
        <dbReference type="ChEBI" id="CHEBI:75799"/>
    </reaction>
</comment>
<comment type="pathway">
    <text evidence="1">Glycolipid metabolism; diglucosyl-diacylglycerol biosynthesis.</text>
</comment>
<comment type="subcellular location">
    <subcellularLocation>
        <location evidence="1">Cell membrane</location>
    </subcellularLocation>
</comment>
<comment type="similarity">
    <text evidence="1">Belongs to the glycosyltransferase 28 family. UgtP subfamily.</text>
</comment>
<proteinExistence type="inferred from homology"/>
<reference key="1">
    <citation type="journal article" date="2001" name="Lancet">
        <title>Whole genome sequencing of meticillin-resistant Staphylococcus aureus.</title>
        <authorList>
            <person name="Kuroda M."/>
            <person name="Ohta T."/>
            <person name="Uchiyama I."/>
            <person name="Baba T."/>
            <person name="Yuzawa H."/>
            <person name="Kobayashi I."/>
            <person name="Cui L."/>
            <person name="Oguchi A."/>
            <person name="Aoki K."/>
            <person name="Nagai Y."/>
            <person name="Lian J.-Q."/>
            <person name="Ito T."/>
            <person name="Kanamori M."/>
            <person name="Matsumaru H."/>
            <person name="Maruyama A."/>
            <person name="Murakami H."/>
            <person name="Hosoyama A."/>
            <person name="Mizutani-Ui Y."/>
            <person name="Takahashi N.K."/>
            <person name="Sawano T."/>
            <person name="Inoue R."/>
            <person name="Kaito C."/>
            <person name="Sekimizu K."/>
            <person name="Hirakawa H."/>
            <person name="Kuhara S."/>
            <person name="Goto S."/>
            <person name="Yabuzaki J."/>
            <person name="Kanehisa M."/>
            <person name="Yamashita A."/>
            <person name="Oshima K."/>
            <person name="Furuya K."/>
            <person name="Yoshino C."/>
            <person name="Shiba T."/>
            <person name="Hattori M."/>
            <person name="Ogasawara N."/>
            <person name="Hayashi H."/>
            <person name="Hiramatsu K."/>
        </authorList>
    </citation>
    <scope>NUCLEOTIDE SEQUENCE [LARGE SCALE GENOMIC DNA]</scope>
    <source>
        <strain>Mu50 / ATCC 700699</strain>
    </source>
</reference>
<organism>
    <name type="scientific">Staphylococcus aureus (strain Mu50 / ATCC 700699)</name>
    <dbReference type="NCBI Taxonomy" id="158878"/>
    <lineage>
        <taxon>Bacteria</taxon>
        <taxon>Bacillati</taxon>
        <taxon>Bacillota</taxon>
        <taxon>Bacilli</taxon>
        <taxon>Bacillales</taxon>
        <taxon>Staphylococcaceae</taxon>
        <taxon>Staphylococcus</taxon>
    </lineage>
</organism>
<sequence length="391" mass="44560">MVTQNKKILIITGSFGNGHMQVTQSIVNQLNDMNLDHLSVIEHDLFMEAHPILTSICKKWYINSFKYFRNMYKGFYYSRPDKLDKCFYKYYGLNKLINLLIKEKPDLILLTFPTPVMSVLTEQFNINIPVATVMTDYRLHKNWITPYSTRYYVATKETKQDFIDVGIDPSTVKVTGIPIDNKFETPINQKQWLIDNNLDPDKQTILMSAGAFGVSKGFDTMITDILAKSANAQVVMICGKSKELKRSLIAKFKSNENVLILGYTKHMNEWMASSQLMITKPGGITITEGFARCIPMIFLNPAPGQELENALYFEEKGFGKIADTPEEAIKIVASLTNGNEQLTNMISTMEQDKIKYATQTICRDLLDLIGHSSQPQEIYGKVPLYARFFVK</sequence>
<accession>Q99V75</accession>
<evidence type="ECO:0000255" key="1">
    <source>
        <dbReference type="HAMAP-Rule" id="MF_01280"/>
    </source>
</evidence>
<protein>
    <recommendedName>
        <fullName evidence="1">Processive diacylglycerol beta-glucosyltransferase</fullName>
        <ecNumber>2.4.1.315</ecNumber>
    </recommendedName>
    <alternativeName>
        <fullName evidence="1">Beta-diglucosyldiacylglycerol synthase</fullName>
        <shortName evidence="1">Beta-DGS</shortName>
        <shortName evidence="1">DGlcDAG synthase</shortName>
        <shortName evidence="1">Glc2-DAG synthase</shortName>
    </alternativeName>
    <alternativeName>
        <fullName evidence="1">Beta-gentiobiosyldiacylglycerol synthase</fullName>
    </alternativeName>
    <alternativeName>
        <fullName evidence="1">Beta-monoglucosyldiacylglycerol synthase</fullName>
        <shortName evidence="1">Beta-MGS</shortName>
        <shortName evidence="1">MGlcDAG synthase</shortName>
    </alternativeName>
    <alternativeName>
        <fullName>Diglucosyl diacylglycerol synthase (1,6-linking)</fullName>
    </alternativeName>
    <alternativeName>
        <fullName evidence="1">Glucosyl-beta-1,6-glucosyldiacylglycerol synthase</fullName>
    </alternativeName>
    <alternativeName>
        <fullName evidence="1">UDP glucosyltransferase</fullName>
    </alternativeName>
    <alternativeName>
        <fullName evidence="1">UDP-glucose:1,2-diacylglycerol-3-beta-D-glucosyltransferase</fullName>
    </alternativeName>
</protein>
<name>UGTP_STAAM</name>
<keyword id="KW-0119">Carbohydrate metabolism</keyword>
<keyword id="KW-1003">Cell membrane</keyword>
<keyword id="KW-0328">Glycosyltransferase</keyword>
<keyword id="KW-0444">Lipid biosynthesis</keyword>
<keyword id="KW-0443">Lipid metabolism</keyword>
<keyword id="KW-0472">Membrane</keyword>
<keyword id="KW-0808">Transferase</keyword>